<dbReference type="EMBL" id="CP001287">
    <property type="protein sequence ID" value="ACK64837.1"/>
    <property type="molecule type" value="Genomic_DNA"/>
</dbReference>
<dbReference type="RefSeq" id="WP_012594113.1">
    <property type="nucleotide sequence ID" value="NC_011726.1"/>
</dbReference>
<dbReference type="SMR" id="B7JYG7"/>
<dbReference type="STRING" id="41431.PCC8801_0754"/>
<dbReference type="KEGG" id="cyp:PCC8801_0754"/>
<dbReference type="eggNOG" id="COG3258">
    <property type="taxonomic scope" value="Bacteria"/>
</dbReference>
<dbReference type="HOGENOM" id="CLU_033498_0_0_3"/>
<dbReference type="OrthoDB" id="581091at2"/>
<dbReference type="Proteomes" id="UP000008204">
    <property type="component" value="Chromosome"/>
</dbReference>
<dbReference type="GO" id="GO:0031676">
    <property type="term" value="C:plasma membrane-derived thylakoid membrane"/>
    <property type="evidence" value="ECO:0007669"/>
    <property type="project" value="UniProtKB-SubCell"/>
</dbReference>
<dbReference type="GO" id="GO:0009055">
    <property type="term" value="F:electron transfer activity"/>
    <property type="evidence" value="ECO:0007669"/>
    <property type="project" value="UniProtKB-UniRule"/>
</dbReference>
<dbReference type="GO" id="GO:0020037">
    <property type="term" value="F:heme binding"/>
    <property type="evidence" value="ECO:0007669"/>
    <property type="project" value="InterPro"/>
</dbReference>
<dbReference type="GO" id="GO:0005506">
    <property type="term" value="F:iron ion binding"/>
    <property type="evidence" value="ECO:0007669"/>
    <property type="project" value="InterPro"/>
</dbReference>
<dbReference type="GO" id="GO:0015979">
    <property type="term" value="P:photosynthesis"/>
    <property type="evidence" value="ECO:0007669"/>
    <property type="project" value="UniProtKB-UniRule"/>
</dbReference>
<dbReference type="FunFam" id="1.20.5.700:FF:000001">
    <property type="entry name" value="Cytochrome f"/>
    <property type="match status" value="1"/>
</dbReference>
<dbReference type="FunFam" id="2.60.40.830:FF:000001">
    <property type="entry name" value="Cytochrome f"/>
    <property type="match status" value="1"/>
</dbReference>
<dbReference type="Gene3D" id="2.40.50.100">
    <property type="match status" value="1"/>
</dbReference>
<dbReference type="Gene3D" id="2.60.40.830">
    <property type="entry name" value="Cytochrome f large domain"/>
    <property type="match status" value="1"/>
</dbReference>
<dbReference type="Gene3D" id="1.20.5.700">
    <property type="entry name" value="Single helix bin"/>
    <property type="match status" value="1"/>
</dbReference>
<dbReference type="HAMAP" id="MF_00610">
    <property type="entry name" value="Cytb6_f_cytF"/>
    <property type="match status" value="1"/>
</dbReference>
<dbReference type="InterPro" id="IPR024058">
    <property type="entry name" value="Cyt-f_TM"/>
</dbReference>
<dbReference type="InterPro" id="IPR002325">
    <property type="entry name" value="Cyt_f"/>
</dbReference>
<dbReference type="InterPro" id="IPR024094">
    <property type="entry name" value="Cyt_f_lg_dom"/>
</dbReference>
<dbReference type="InterPro" id="IPR036826">
    <property type="entry name" value="Cyt_f_lg_dom_sf"/>
</dbReference>
<dbReference type="InterPro" id="IPR011054">
    <property type="entry name" value="Rudment_hybrid_motif"/>
</dbReference>
<dbReference type="NCBIfam" id="NF002736">
    <property type="entry name" value="PRK02693.1"/>
    <property type="match status" value="1"/>
</dbReference>
<dbReference type="PANTHER" id="PTHR33288">
    <property type="match status" value="1"/>
</dbReference>
<dbReference type="PANTHER" id="PTHR33288:SF10">
    <property type="entry name" value="CYTOCHROME F"/>
    <property type="match status" value="1"/>
</dbReference>
<dbReference type="Pfam" id="PF01333">
    <property type="entry name" value="Apocytochr_F_C"/>
    <property type="match status" value="1"/>
</dbReference>
<dbReference type="Pfam" id="PF16639">
    <property type="entry name" value="Apocytochr_F_N"/>
    <property type="match status" value="1"/>
</dbReference>
<dbReference type="PRINTS" id="PR00610">
    <property type="entry name" value="CYTOCHROMEF"/>
</dbReference>
<dbReference type="SUPFAM" id="SSF103431">
    <property type="entry name" value="Cytochrome f subunit of the cytochrome b6f complex, transmembrane anchor"/>
    <property type="match status" value="1"/>
</dbReference>
<dbReference type="SUPFAM" id="SSF49441">
    <property type="entry name" value="Cytochrome f, large domain"/>
    <property type="match status" value="1"/>
</dbReference>
<dbReference type="SUPFAM" id="SSF51246">
    <property type="entry name" value="Rudiment single hybrid motif"/>
    <property type="match status" value="1"/>
</dbReference>
<dbReference type="PROSITE" id="PS51010">
    <property type="entry name" value="CYTF"/>
    <property type="match status" value="1"/>
</dbReference>
<keyword id="KW-0249">Electron transport</keyword>
<keyword id="KW-0349">Heme</keyword>
<keyword id="KW-0408">Iron</keyword>
<keyword id="KW-0472">Membrane</keyword>
<keyword id="KW-0479">Metal-binding</keyword>
<keyword id="KW-0602">Photosynthesis</keyword>
<keyword id="KW-1185">Reference proteome</keyword>
<keyword id="KW-0732">Signal</keyword>
<keyword id="KW-0793">Thylakoid</keyword>
<keyword id="KW-0812">Transmembrane</keyword>
<keyword id="KW-1133">Transmembrane helix</keyword>
<keyword id="KW-0813">Transport</keyword>
<reference key="1">
    <citation type="journal article" date="2011" name="MBio">
        <title>Novel metabolic attributes of the genus Cyanothece, comprising a group of unicellular nitrogen-fixing Cyanobacteria.</title>
        <authorList>
            <person name="Bandyopadhyay A."/>
            <person name="Elvitigala T."/>
            <person name="Welsh E."/>
            <person name="Stockel J."/>
            <person name="Liberton M."/>
            <person name="Min H."/>
            <person name="Sherman L.A."/>
            <person name="Pakrasi H.B."/>
        </authorList>
    </citation>
    <scope>NUCLEOTIDE SEQUENCE [LARGE SCALE GENOMIC DNA]</scope>
    <source>
        <strain>PCC 8801 / RF-1</strain>
    </source>
</reference>
<name>CYF_RIPO1</name>
<evidence type="ECO:0000255" key="1">
    <source>
        <dbReference type="HAMAP-Rule" id="MF_00610"/>
    </source>
</evidence>
<accession>B7JYG7</accession>
<gene>
    <name evidence="1" type="primary">petA</name>
    <name type="ordered locus">PCC8801_0754</name>
</gene>
<comment type="function">
    <text evidence="1">Component of the cytochrome b6-f complex, which mediates electron transfer between photosystem II (PSII) and photosystem I (PSI), cyclic electron flow around PSI, and state transitions.</text>
</comment>
<comment type="cofactor">
    <cofactor evidence="1">
        <name>heme</name>
        <dbReference type="ChEBI" id="CHEBI:30413"/>
    </cofactor>
    <text evidence="1">Binds 1 heme group covalently.</text>
</comment>
<comment type="subunit">
    <text evidence="1">The 4 large subunits of the cytochrome b6-f complex are cytochrome b6, subunit IV (17 kDa polypeptide, PetD), cytochrome f and the Rieske protein, while the 4 small subunits are PetG, PetL, PetM and PetN. The complex functions as a dimer.</text>
</comment>
<comment type="subcellular location">
    <subcellularLocation>
        <location evidence="1">Cellular thylakoid membrane</location>
        <topology evidence="1">Single-pass membrane protein</topology>
    </subcellularLocation>
</comment>
<comment type="similarity">
    <text evidence="1">Belongs to the cytochrome f family.</text>
</comment>
<organism>
    <name type="scientific">Rippkaea orientalis (strain PCC 8801 / RF-1)</name>
    <name type="common">Cyanothece sp. (strain PCC 8801)</name>
    <dbReference type="NCBI Taxonomy" id="41431"/>
    <lineage>
        <taxon>Bacteria</taxon>
        <taxon>Bacillati</taxon>
        <taxon>Cyanobacteriota</taxon>
        <taxon>Cyanophyceae</taxon>
        <taxon>Oscillatoriophycideae</taxon>
        <taxon>Chroococcales</taxon>
        <taxon>Aphanothecaceae</taxon>
        <taxon>Rippkaea</taxon>
        <taxon>Rippkaea orientalis</taxon>
    </lineage>
</organism>
<protein>
    <recommendedName>
        <fullName evidence="1">Cytochrome f</fullName>
    </recommendedName>
</protein>
<feature type="signal peptide" evidence="1">
    <location>
        <begin position="1"/>
        <end position="44"/>
    </location>
</feature>
<feature type="chain" id="PRO_1000130349" description="Cytochrome f">
    <location>
        <begin position="45"/>
        <end position="328"/>
    </location>
</feature>
<feature type="transmembrane region" description="Helical" evidence="1">
    <location>
        <begin position="294"/>
        <end position="314"/>
    </location>
</feature>
<feature type="binding site" description="axial binding residue" evidence="1">
    <location>
        <position position="45"/>
    </location>
    <ligand>
        <name>heme</name>
        <dbReference type="ChEBI" id="CHEBI:30413"/>
    </ligand>
    <ligandPart>
        <name>Fe</name>
        <dbReference type="ChEBI" id="CHEBI:18248"/>
    </ligandPart>
</feature>
<feature type="binding site" description="covalent" evidence="1">
    <location>
        <position position="66"/>
    </location>
    <ligand>
        <name>heme</name>
        <dbReference type="ChEBI" id="CHEBI:30413"/>
    </ligand>
</feature>
<feature type="binding site" description="covalent" evidence="1">
    <location>
        <position position="69"/>
    </location>
    <ligand>
        <name>heme</name>
        <dbReference type="ChEBI" id="CHEBI:30413"/>
    </ligand>
</feature>
<feature type="binding site" description="axial binding residue" evidence="1">
    <location>
        <position position="70"/>
    </location>
    <ligand>
        <name>heme</name>
        <dbReference type="ChEBI" id="CHEBI:30413"/>
    </ligand>
    <ligandPart>
        <name>Fe</name>
        <dbReference type="ChEBI" id="CHEBI:18248"/>
    </ligandPart>
</feature>
<sequence length="328" mass="35505">MRTPDFSAIWQASKQLTARIILLAFATFALYVFHDLAFPQGAAAYPFWAQQTAPETPREATGRIVCANCHLAQKPAEVEIPQSVLPDTVFEAVVKIPYDLDSQQVLGDGSKGGLNVGAVLMLPEGFKIAPEDRIPEEMKEKIEGLYFQPYREDQENVVIVGPLPGDQYQEIVFPVLSPDPATNKSIEFGKYSVHLGANRGRGQVYPTGELSNNNAFKASKAGTVTEISQTEEGGYSVTVTTSEGDVVETIPPGPELIVTKGQQVAAGDALTNNPNVGGFGQKDTEVVLQSPGRIKGLMVFLAGIMLAQILLVIKKKQVERVQAAEMNF</sequence>
<proteinExistence type="inferred from homology"/>